<comment type="function">
    <text evidence="3 7 11">Protein-lysine 6-oxidase that mediates the oxidation of peptidyl lysine residues to allysine in target proteins (PubMed:17018530, PubMed:28065600). Catalyzes the post-translational oxidative deamination of peptidyl lysine residues in precursors of elastin and different types of collagens, a prerequisite in the formation of cross-links between collagens and elastin (PubMed:17018530). Required for somite boundary formation by catalyzing oxidation of fibronectin (FN1), enhancing integrin signaling in myofibers and their adhesion to the myotendinous junction (MTJ) (By similarity). Acts as a regulator of inflammatory response by inhibiting differentiation of naive CD4(+) T-cells into T-helper Th17 or regulatory T-cells (Treg): acts by interacting with STAT3 in the nucleus and catalyzing both deacetylation and oxidation of lysine residues on STAT3, leading to disrupt STAT3 dimerization and inhibit STAT3 transcription activity (PubMed:28065600). Oxidation of lysine residues to allysine on STAT3 preferentially takes place on lysine residues that are acetylated (PubMed:28065600). Also able to catalyze deacetylation of lysine residues on STAT3 (PubMed:28065600).</text>
</comment>
<comment type="function">
    <molecule>Isoform 1</molecule>
    <text evidence="7">Shows protein-lysine 6-oxidase activity toward elastin and different types of collagens, with the highest activity toward collagen type VIII (PubMed:17018530).</text>
</comment>
<comment type="function">
    <molecule>Isoform 2</molecule>
    <text evidence="7">Shows protein-lysine 6-oxidase activity toward elastin and different types of collagens, with the highest activity toward collagen type IV (PubMed:17018530).</text>
</comment>
<comment type="catalytic activity">
    <reaction evidence="11">
        <text>L-lysyl-[protein] + O2 + H2O = (S)-2-amino-6-oxohexanoyl-[protein] + H2O2 + NH4(+)</text>
        <dbReference type="Rhea" id="RHEA:24544"/>
        <dbReference type="Rhea" id="RHEA-COMP:9752"/>
        <dbReference type="Rhea" id="RHEA-COMP:12448"/>
        <dbReference type="ChEBI" id="CHEBI:15377"/>
        <dbReference type="ChEBI" id="CHEBI:15379"/>
        <dbReference type="ChEBI" id="CHEBI:16240"/>
        <dbReference type="ChEBI" id="CHEBI:28938"/>
        <dbReference type="ChEBI" id="CHEBI:29969"/>
        <dbReference type="ChEBI" id="CHEBI:131803"/>
        <dbReference type="EC" id="1.4.3.13"/>
    </reaction>
</comment>
<comment type="catalytic activity">
    <reaction evidence="11">
        <text>N(6)-acetyl-L-lysyl-[protein] + O2 + H2O = acetamide + (S)-2-amino-6-oxohexanoyl-[protein] + H2O2</text>
        <dbReference type="Rhea" id="RHEA:51648"/>
        <dbReference type="Rhea" id="RHEA-COMP:10731"/>
        <dbReference type="Rhea" id="RHEA-COMP:12448"/>
        <dbReference type="ChEBI" id="CHEBI:15377"/>
        <dbReference type="ChEBI" id="CHEBI:15379"/>
        <dbReference type="ChEBI" id="CHEBI:16240"/>
        <dbReference type="ChEBI" id="CHEBI:27856"/>
        <dbReference type="ChEBI" id="CHEBI:61930"/>
        <dbReference type="ChEBI" id="CHEBI:131803"/>
    </reaction>
</comment>
<comment type="cofactor">
    <cofactor evidence="1">
        <name>Cu cation</name>
        <dbReference type="ChEBI" id="CHEBI:23378"/>
    </cofactor>
</comment>
<comment type="cofactor">
    <cofactor evidence="2">
        <name>lysine tyrosylquinone residue</name>
        <dbReference type="ChEBI" id="CHEBI:20489"/>
    </cofactor>
    <text evidence="2">Contains 1 lysine tyrosylquinone.</text>
</comment>
<comment type="biophysicochemical properties">
    <kinetics>
        <KM evidence="11">6.72 uM for STAT3 acetylated at 'Lys-685' (for deacetylation activity)</KM>
        <KM evidence="11">1.59 uM for STAT3 acetylated at 'Lys-685' (for lysine 6-oxidase activity)</KM>
        <text evidence="11">kcat is 0.058 sec(-1) with STAT3 acetylated at 'Lys-685' (for deacetylation activity). kcat is 0.022 sec(-1) with STAT3 acetylated at 'Lys-685' (for lysine 6-oxidase activity).</text>
    </kinetics>
</comment>
<comment type="subunit">
    <text evidence="11">Interacts with STAT3 (PubMed:28065600).</text>
</comment>
<comment type="interaction">
    <interactant intactId="EBI-723960">
        <id>P58215</id>
    </interactant>
    <interactant intactId="EBI-25406979">
        <id>Q7TSK7</id>
        <label>Adamtsl2</label>
    </interactant>
    <organismsDiffer>true</organismsDiffer>
    <experiments>2</experiments>
</comment>
<comment type="subcellular location">
    <subcellularLocation>
        <location evidence="3">Secreted</location>
        <location evidence="3">Extracellular space</location>
    </subcellularLocation>
    <subcellularLocation>
        <location evidence="11">Cytoplasm</location>
    </subcellularLocation>
    <subcellularLocation>
        <location evidence="11">Nucleus</location>
    </subcellularLocation>
    <text evidence="11">It is unclear how LOXL3 is both intracellular (cytoplasmic and nuclear) and extracellular: it contains a clear signal sequence and is predicted to localize in the extracellular medium. However, the intracellular location is clearly reported and at least another protein of the family (LOXL2) also has intracellular and extracellular localization despite the presence of a signal sequence (PubMed:28065600).</text>
</comment>
<comment type="subcellular location">
    <molecule>Isoform 1</molecule>
    <subcellularLocation>
        <location evidence="17">Secreted</location>
        <location evidence="17">Extracellular space</location>
    </subcellularLocation>
</comment>
<comment type="subcellular location">
    <molecule>Isoform 2</molecule>
    <subcellularLocation>
        <location evidence="7">Cytoplasm</location>
    </subcellularLocation>
    <subcellularLocation>
        <location evidence="7">Secreted</location>
        <location evidence="7">Extracellular space</location>
    </subcellularLocation>
</comment>
<comment type="alternative products">
    <event type="alternative splicing"/>
    <isoform>
        <id>P58215-1</id>
        <name>1</name>
        <sequence type="displayed"/>
    </isoform>
    <isoform>
        <id>P58215-2</id>
        <name>2</name>
        <name evidence="16">LOXL3-sv1</name>
        <sequence type="described" ref="VSP_054417"/>
    </isoform>
    <isoform>
        <id>P58215-3</id>
        <name>3</name>
        <sequence type="described" ref="VSP_054418"/>
    </isoform>
</comment>
<comment type="tissue specificity">
    <text evidence="7 9">Isoform 1: Predominantly detected in the heart, placenta, lung, and small intestine (PubMed:17018530). Isoform 2: Highly detected in the kidney, pancreas, spleen, and thymus, and is absent in lung (PubMed:17018530). In eye, present in all layers of corneas as well as in the limbus and conjunctiva (at protein level) (PubMed:26218558).</text>
</comment>
<comment type="PTM">
    <text evidence="2">The lysine tyrosylquinone cross-link (LTQ) is generated by condensation of the epsilon-amino group of a lysine with a topaquinone produced by oxidation of tyrosine.</text>
</comment>
<comment type="disease">
    <text evidence="8">Defects in LOXL3 are found in a family with an autosomal recessive form of Stickler syndrome, an inherited disorder that associates ocular signs with more or less complete forms of Pierre Robin sequence and sensorineural deafness (PubMed:25663169). Pierre Robin sequence includes an opening in the roof of the mouth (a cleft palate) (PubMed:25663169). The degree of hearing loss varies among affected individuals and may become more severe over time (PubMed:25663169). Syndrome expressivity is variable (PubMed:25663169). Ocular disorders include non-progressive myopia with associated chorioretinal degeneration (PubMed:25663169).</text>
</comment>
<comment type="disease" evidence="10 12">
    <disease id="DI-06357">
        <name>Myopia 28, autosomal recessive</name>
        <acronym>MYP28</acronym>
        <description>A form of myopia, a refractive error of the eye, in which parallel rays from a distant object come to focus in front of the retina, vision being better for near objects than for far. MYP28 patients are affected by early-onset high myopia in the first decade of life. Retinal detachment may occur, and early-onset cataract has been reported.</description>
        <dbReference type="MIM" id="619781"/>
    </disease>
    <text>The disease is caused by variants affecting the gene represented in this entry.</text>
</comment>
<comment type="miscellaneous">
    <molecule>Isoform 2</molecule>
    <text evidence="17">Misses three SRCR domains.</text>
</comment>
<comment type="similarity">
    <text evidence="17">Belongs to the lysyl oxidase family.</text>
</comment>
<comment type="online information" name="Atlas of Genetics and Cytogenetics in Oncology and Haematology">
    <link uri="https://atlasgeneticsoncology.org/gene/44000/LOXL3"/>
</comment>
<evidence type="ECO:0000250" key="1">
    <source>
        <dbReference type="UniProtKB" id="P16636"/>
    </source>
</evidence>
<evidence type="ECO:0000250" key="2">
    <source>
        <dbReference type="UniProtKB" id="P33072"/>
    </source>
</evidence>
<evidence type="ECO:0000250" key="3">
    <source>
        <dbReference type="UniProtKB" id="Q9Z175"/>
    </source>
</evidence>
<evidence type="ECO:0000255" key="4"/>
<evidence type="ECO:0000255" key="5">
    <source>
        <dbReference type="PROSITE-ProRule" id="PRU00196"/>
    </source>
</evidence>
<evidence type="ECO:0000256" key="6">
    <source>
        <dbReference type="SAM" id="MobiDB-lite"/>
    </source>
</evidence>
<evidence type="ECO:0000269" key="7">
    <source>
    </source>
</evidence>
<evidence type="ECO:0000269" key="8">
    <source>
    </source>
</evidence>
<evidence type="ECO:0000269" key="9">
    <source>
    </source>
</evidence>
<evidence type="ECO:0000269" key="10">
    <source>
    </source>
</evidence>
<evidence type="ECO:0000269" key="11">
    <source>
    </source>
</evidence>
<evidence type="ECO:0000269" key="12">
    <source>
    </source>
</evidence>
<evidence type="ECO:0000303" key="13">
    <source>
    </source>
</evidence>
<evidence type="ECO:0000303" key="14">
    <source>
    </source>
</evidence>
<evidence type="ECO:0000303" key="15">
    <source>
    </source>
</evidence>
<evidence type="ECO:0000303" key="16">
    <source>
    </source>
</evidence>
<evidence type="ECO:0000305" key="17"/>
<evidence type="ECO:0000312" key="18">
    <source>
        <dbReference type="HGNC" id="HGNC:13869"/>
    </source>
</evidence>
<protein>
    <recommendedName>
        <fullName evidence="17">Lysyl oxidase homolog 3</fullName>
        <ecNumber evidence="11">1.4.3.-</ecNumber>
        <ecNumber evidence="11">1.4.3.13</ecNumber>
    </recommendedName>
    <alternativeName>
        <fullName evidence="14">Lysyl oxidase-like protein 3</fullName>
    </alternativeName>
</protein>
<gene>
    <name evidence="14 18" type="primary">LOXL3</name>
    <name evidence="13" type="synonym">LOXL</name>
</gene>
<organism>
    <name type="scientific">Homo sapiens</name>
    <name type="common">Human</name>
    <dbReference type="NCBI Taxonomy" id="9606"/>
    <lineage>
        <taxon>Eukaryota</taxon>
        <taxon>Metazoa</taxon>
        <taxon>Chordata</taxon>
        <taxon>Craniata</taxon>
        <taxon>Vertebrata</taxon>
        <taxon>Euteleostomi</taxon>
        <taxon>Mammalia</taxon>
        <taxon>Eutheria</taxon>
        <taxon>Euarchontoglires</taxon>
        <taxon>Primates</taxon>
        <taxon>Haplorrhini</taxon>
        <taxon>Catarrhini</taxon>
        <taxon>Hominidae</taxon>
        <taxon>Homo</taxon>
    </lineage>
</organism>
<name>LOXL3_HUMAN</name>
<reference key="1">
    <citation type="journal article" date="2001" name="Biochem. J.">
        <title>Cloning and characterization of a fourth human lysyl oxidase isoenzyme.</title>
        <authorList>
            <person name="Maki J.M."/>
            <person name="Kivirikko K.I."/>
        </authorList>
    </citation>
    <scope>NUCLEOTIDE SEQUENCE [MRNA] (ISOFORM 1)</scope>
</reference>
<reference key="2">
    <citation type="journal article" date="2001" name="Genomics">
        <title>Central nervous system, uterus, heart, and leukocyte expression of the LOXL3 gene, encoding a novel lysyl oxidase-like protein.</title>
        <authorList>
            <person name="Jourdan-Le Saux C."/>
            <person name="Tomshe A."/>
            <person name="Ujfalusi A."/>
            <person name="Jia L."/>
            <person name="Csiszar K."/>
        </authorList>
    </citation>
    <scope>NUCLEOTIDE SEQUENCE [MRNA] (ISOFORM 1)</scope>
</reference>
<reference key="3">
    <citation type="journal article" date="2001" name="Matrix Biol.">
        <title>Cloning and characterization of a human lysyl oxidase-like 3 gene (hLOXL3).</title>
        <authorList>
            <person name="Huang Y."/>
            <person name="Dai J."/>
            <person name="Tang R."/>
            <person name="Zhao W."/>
            <person name="Zhou Z."/>
            <person name="Wang W."/>
            <person name="Ying K."/>
            <person name="Xie Y."/>
            <person name="Mao Y."/>
        </authorList>
    </citation>
    <scope>NUCLEOTIDE SEQUENCE [MRNA] (ISOFORM 1)</scope>
</reference>
<reference key="4">
    <citation type="journal article" date="2006" name="J. Biol. Chem.">
        <title>A tissue-specific variant of the human lysyl oxidase-like protein 3 (LOXL3) functions as an amine oxidase with substrate specificity.</title>
        <authorList>
            <person name="Lee J.-E."/>
            <person name="Kim Y."/>
        </authorList>
    </citation>
    <scope>NUCLEOTIDE SEQUENCE [MRNA] (ISOFORM 2)</scope>
    <scope>FUNCTION (ISOFORMS 1 AND 2)</scope>
    <scope>SUBCELLULAR LOCATION (ISOFORM 2)</scope>
    <scope>TISSUE SPECIFICITY</scope>
</reference>
<reference key="5">
    <citation type="journal article" date="2005" name="Nature">
        <title>Generation and annotation of the DNA sequences of human chromosomes 2 and 4.</title>
        <authorList>
            <person name="Hillier L.W."/>
            <person name="Graves T.A."/>
            <person name="Fulton R.S."/>
            <person name="Fulton L.A."/>
            <person name="Pepin K.H."/>
            <person name="Minx P."/>
            <person name="Wagner-McPherson C."/>
            <person name="Layman D."/>
            <person name="Wylie K."/>
            <person name="Sekhon M."/>
            <person name="Becker M.C."/>
            <person name="Fewell G.A."/>
            <person name="Delehaunty K.D."/>
            <person name="Miner T.L."/>
            <person name="Nash W.E."/>
            <person name="Kremitzki C."/>
            <person name="Oddy L."/>
            <person name="Du H."/>
            <person name="Sun H."/>
            <person name="Bradshaw-Cordum H."/>
            <person name="Ali J."/>
            <person name="Carter J."/>
            <person name="Cordes M."/>
            <person name="Harris A."/>
            <person name="Isak A."/>
            <person name="van Brunt A."/>
            <person name="Nguyen C."/>
            <person name="Du F."/>
            <person name="Courtney L."/>
            <person name="Kalicki J."/>
            <person name="Ozersky P."/>
            <person name="Abbott S."/>
            <person name="Armstrong J."/>
            <person name="Belter E.A."/>
            <person name="Caruso L."/>
            <person name="Cedroni M."/>
            <person name="Cotton M."/>
            <person name="Davidson T."/>
            <person name="Desai A."/>
            <person name="Elliott G."/>
            <person name="Erb T."/>
            <person name="Fronick C."/>
            <person name="Gaige T."/>
            <person name="Haakenson W."/>
            <person name="Haglund K."/>
            <person name="Holmes A."/>
            <person name="Harkins R."/>
            <person name="Kim K."/>
            <person name="Kruchowski S.S."/>
            <person name="Strong C.M."/>
            <person name="Grewal N."/>
            <person name="Goyea E."/>
            <person name="Hou S."/>
            <person name="Levy A."/>
            <person name="Martinka S."/>
            <person name="Mead K."/>
            <person name="McLellan M.D."/>
            <person name="Meyer R."/>
            <person name="Randall-Maher J."/>
            <person name="Tomlinson C."/>
            <person name="Dauphin-Kohlberg S."/>
            <person name="Kozlowicz-Reilly A."/>
            <person name="Shah N."/>
            <person name="Swearengen-Shahid S."/>
            <person name="Snider J."/>
            <person name="Strong J.T."/>
            <person name="Thompson J."/>
            <person name="Yoakum M."/>
            <person name="Leonard S."/>
            <person name="Pearman C."/>
            <person name="Trani L."/>
            <person name="Radionenko M."/>
            <person name="Waligorski J.E."/>
            <person name="Wang C."/>
            <person name="Rock S.M."/>
            <person name="Tin-Wollam A.-M."/>
            <person name="Maupin R."/>
            <person name="Latreille P."/>
            <person name="Wendl M.C."/>
            <person name="Yang S.-P."/>
            <person name="Pohl C."/>
            <person name="Wallis J.W."/>
            <person name="Spieth J."/>
            <person name="Bieri T.A."/>
            <person name="Berkowicz N."/>
            <person name="Nelson J.O."/>
            <person name="Osborne J."/>
            <person name="Ding L."/>
            <person name="Meyer R."/>
            <person name="Sabo A."/>
            <person name="Shotland Y."/>
            <person name="Sinha P."/>
            <person name="Wohldmann P.E."/>
            <person name="Cook L.L."/>
            <person name="Hickenbotham M.T."/>
            <person name="Eldred J."/>
            <person name="Williams D."/>
            <person name="Jones T.A."/>
            <person name="She X."/>
            <person name="Ciccarelli F.D."/>
            <person name="Izaurralde E."/>
            <person name="Taylor J."/>
            <person name="Schmutz J."/>
            <person name="Myers R.M."/>
            <person name="Cox D.R."/>
            <person name="Huang X."/>
            <person name="McPherson J.D."/>
            <person name="Mardis E.R."/>
            <person name="Clifton S.W."/>
            <person name="Warren W.C."/>
            <person name="Chinwalla A.T."/>
            <person name="Eddy S.R."/>
            <person name="Marra M.A."/>
            <person name="Ovcharenko I."/>
            <person name="Furey T.S."/>
            <person name="Miller W."/>
            <person name="Eichler E.E."/>
            <person name="Bork P."/>
            <person name="Suyama M."/>
            <person name="Torrents D."/>
            <person name="Waterston R.H."/>
            <person name="Wilson R.K."/>
        </authorList>
    </citation>
    <scope>NUCLEOTIDE SEQUENCE [LARGE SCALE GENOMIC DNA]</scope>
</reference>
<reference key="6">
    <citation type="submission" date="2005-09" db="EMBL/GenBank/DDBJ databases">
        <authorList>
            <person name="Mural R.J."/>
            <person name="Istrail S."/>
            <person name="Sutton G.G."/>
            <person name="Florea L."/>
            <person name="Halpern A.L."/>
            <person name="Mobarry C.M."/>
            <person name="Lippert R."/>
            <person name="Walenz B."/>
            <person name="Shatkay H."/>
            <person name="Dew I."/>
            <person name="Miller J.R."/>
            <person name="Flanigan M.J."/>
            <person name="Edwards N.J."/>
            <person name="Bolanos R."/>
            <person name="Fasulo D."/>
            <person name="Halldorsson B.V."/>
            <person name="Hannenhalli S."/>
            <person name="Turner R."/>
            <person name="Yooseph S."/>
            <person name="Lu F."/>
            <person name="Nusskern D.R."/>
            <person name="Shue B.C."/>
            <person name="Zheng X.H."/>
            <person name="Zhong F."/>
            <person name="Delcher A.L."/>
            <person name="Huson D.H."/>
            <person name="Kravitz S.A."/>
            <person name="Mouchard L."/>
            <person name="Reinert K."/>
            <person name="Remington K.A."/>
            <person name="Clark A.G."/>
            <person name="Waterman M.S."/>
            <person name="Eichler E.E."/>
            <person name="Adams M.D."/>
            <person name="Hunkapiller M.W."/>
            <person name="Myers E.W."/>
            <person name="Venter J.C."/>
        </authorList>
    </citation>
    <scope>NUCLEOTIDE SEQUENCE [LARGE SCALE GENOMIC DNA]</scope>
</reference>
<reference key="7">
    <citation type="journal article" date="2004" name="Genome Res.">
        <title>The status, quality, and expansion of the NIH full-length cDNA project: the Mammalian Gene Collection (MGC).</title>
        <authorList>
            <consortium name="The MGC Project Team"/>
        </authorList>
    </citation>
    <scope>NUCLEOTIDE SEQUENCE [LARGE SCALE MRNA] (ISOFORM 3)</scope>
    <source>
        <tissue>Ovary</tissue>
    </source>
</reference>
<reference key="8">
    <citation type="journal article" date="2015" name="Hum. Genet.">
        <title>LOXL3, encoding lysyl oxidase-like 3, is mutated in a family with autosomal recessive Stickler syndrome.</title>
        <authorList>
            <person name="Alzahrani F."/>
            <person name="Al Hazzaa S.A."/>
            <person name="Tayeb H."/>
            <person name="Alkuraya F.S."/>
        </authorList>
    </citation>
    <scope>INVOLVEMENT IN STICKLER SYNDROME</scope>
    <scope>VARIANT TYR-676</scope>
</reference>
<reference key="9">
    <citation type="journal article" date="2016" name="Histol. Histopathol.">
        <title>The presence of lysyl oxidase-like enzymes in human control and keratoconic corneas.</title>
        <authorList>
            <person name="Dudakova L."/>
            <person name="Sasaki T."/>
            <person name="Liskova P."/>
            <person name="Palos M."/>
            <person name="Jirsova K."/>
        </authorList>
    </citation>
    <scope>TISSUE SPECIFICITY</scope>
</reference>
<reference key="10">
    <citation type="journal article" date="2016" name="Mol. Vis.">
        <title>Exome sequencing identified null mutations in LOXL3 associated with early-onset high myopia.</title>
        <authorList>
            <person name="Li J."/>
            <person name="Gao B."/>
            <person name="Xiao X."/>
            <person name="Li S."/>
            <person name="Jia X."/>
            <person name="Sun W."/>
            <person name="Guo X."/>
            <person name="Zhang Q."/>
        </authorList>
    </citation>
    <scope>INVOLVEMENT IN MYP28</scope>
</reference>
<reference key="11">
    <citation type="journal article" date="2017" name="Mol. Cell">
        <title>Lysyl oxidase 3 is a dual-specificity enzyme involved in STAT3 deacetylation and deacetylimination modulation.</title>
        <authorList>
            <person name="Ma L."/>
            <person name="Huang C."/>
            <person name="Wang X.J."/>
            <person name="Xin D.E."/>
            <person name="Wang L.S."/>
            <person name="Zou Q.C."/>
            <person name="Zhang Y.S."/>
            <person name="Tan M.D."/>
            <person name="Wang Y.M."/>
            <person name="Zhao T.C."/>
            <person name="Chatterjee D."/>
            <person name="Altura R.A."/>
            <person name="Wang C."/>
            <person name="Xu Y.S."/>
            <person name="Yang J.H."/>
            <person name="Fan Y.S."/>
            <person name="Han B.H."/>
            <person name="Si J."/>
            <person name="Zhang X."/>
            <person name="Cheng J."/>
            <person name="Chang Z."/>
            <person name="Chin Y.E."/>
        </authorList>
    </citation>
    <scope>FUNCTION</scope>
    <scope>CATALYTIC ACTIVITY</scope>
    <scope>BIOPHYSICOCHEMICAL PROPERTIES</scope>
    <scope>SUBCELLULAR LOCATION</scope>
    <scope>INTERACTION WITH STAT3</scope>
    <scope>MUTAGENESIS OF CYS-83; CYS-214; CYS-345; CYS-376; CYS-446; CYS-459; CYS-492 AND 607-HIS--HIS-609</scope>
</reference>
<reference key="12">
    <citation type="journal article" date="2020" name="Front. Genet.">
        <title>Exploiting the Autozygome to Support Previously Published Mendelian Gene-Disease Associations: An Update.</title>
        <authorList>
            <person name="Maddirevula S."/>
            <person name="Shamseldin H.E."/>
            <person name="Sirr A."/>
            <person name="Alabdi L."/>
            <person name="Lo R.S."/>
            <person name="Ewida N."/>
            <person name="Al-Qahtani M."/>
            <person name="Hashem M."/>
            <person name="Abdulwahab F."/>
            <person name="Aboyousef O."/>
            <person name="Kaya N."/>
            <person name="Monies D."/>
            <person name="Salem M.H."/>
            <person name="Al Harbi N."/>
            <person name="Aldhalaan H.M."/>
            <person name="Alzaidan H."/>
            <person name="Almanea H.M."/>
            <person name="Alsalamah A.K."/>
            <person name="Al Mutairi F."/>
            <person name="Ismail S."/>
            <person name="Abdel-Salam G.M.H."/>
            <person name="Alhashem A."/>
            <person name="Asery A."/>
            <person name="Faqeih E."/>
            <person name="Al-Qassmi A."/>
            <person name="Al-Hamoudi W."/>
            <person name="Algoufi T."/>
            <person name="Shagrani M."/>
            <person name="Dudley A.M."/>
            <person name="Alkuraya F.S."/>
        </authorList>
    </citation>
    <scope>INVOLVEMENT IN MYP28</scope>
</reference>
<proteinExistence type="evidence at protein level"/>
<keyword id="KW-0025">Alternative splicing</keyword>
<keyword id="KW-0186">Copper</keyword>
<keyword id="KW-0963">Cytoplasm</keyword>
<keyword id="KW-0209">Deafness</keyword>
<keyword id="KW-1015">Disulfide bond</keyword>
<keyword id="KW-0325">Glycoprotein</keyword>
<keyword id="KW-0395">Inflammatory response</keyword>
<keyword id="KW-0886">LTQ</keyword>
<keyword id="KW-0479">Metal-binding</keyword>
<keyword id="KW-0539">Nucleus</keyword>
<keyword id="KW-0560">Oxidoreductase</keyword>
<keyword id="KW-1267">Proteomics identification</keyword>
<keyword id="KW-1185">Reference proteome</keyword>
<keyword id="KW-0677">Repeat</keyword>
<keyword id="KW-0964">Secreted</keyword>
<keyword id="KW-0732">Signal</keyword>
<keyword id="KW-0757">Stickler syndrome</keyword>
<keyword id="KW-0801">TPQ</keyword>
<dbReference type="EC" id="1.4.3.-" evidence="11"/>
<dbReference type="EC" id="1.4.3.13" evidence="11"/>
<dbReference type="EMBL" id="AF282619">
    <property type="protein sequence ID" value="AAK51671.1"/>
    <property type="molecule type" value="mRNA"/>
</dbReference>
<dbReference type="EMBL" id="AF311313">
    <property type="protein sequence ID" value="AAK63205.1"/>
    <property type="molecule type" value="mRNA"/>
</dbReference>
<dbReference type="EMBL" id="AF284815">
    <property type="protein sequence ID" value="AAK91134.1"/>
    <property type="molecule type" value="mRNA"/>
</dbReference>
<dbReference type="EMBL" id="DQ378059">
    <property type="protein sequence ID" value="ABD23013.1"/>
    <property type="molecule type" value="mRNA"/>
</dbReference>
<dbReference type="EMBL" id="AC005033">
    <property type="status" value="NOT_ANNOTATED_CDS"/>
    <property type="molecule type" value="Genomic_DNA"/>
</dbReference>
<dbReference type="EMBL" id="AC005041">
    <property type="status" value="NOT_ANNOTATED_CDS"/>
    <property type="molecule type" value="Genomic_DNA"/>
</dbReference>
<dbReference type="EMBL" id="CH471053">
    <property type="protein sequence ID" value="EAW99615.1"/>
    <property type="molecule type" value="Genomic_DNA"/>
</dbReference>
<dbReference type="EMBL" id="CH471053">
    <property type="protein sequence ID" value="EAW99616.1"/>
    <property type="molecule type" value="Genomic_DNA"/>
</dbReference>
<dbReference type="EMBL" id="BC071865">
    <property type="protein sequence ID" value="AAH71865.1"/>
    <property type="molecule type" value="mRNA"/>
</dbReference>
<dbReference type="CCDS" id="CCDS1953.1">
    <molecule id="P58215-1"/>
</dbReference>
<dbReference type="CCDS" id="CCDS74527.1">
    <molecule id="P58215-3"/>
</dbReference>
<dbReference type="RefSeq" id="NP_001276093.1">
    <molecule id="P58215-3"/>
    <property type="nucleotide sequence ID" value="NM_001289164.3"/>
</dbReference>
<dbReference type="RefSeq" id="NP_001276094.1">
    <molecule id="P58215-2"/>
    <property type="nucleotide sequence ID" value="NM_001289165.2"/>
</dbReference>
<dbReference type="RefSeq" id="NP_115992.1">
    <molecule id="P58215-1"/>
    <property type="nucleotide sequence ID" value="NM_032603.5"/>
</dbReference>
<dbReference type="RefSeq" id="XP_011531436.1">
    <molecule id="P58215-1"/>
    <property type="nucleotide sequence ID" value="XM_011533134.3"/>
</dbReference>
<dbReference type="RefSeq" id="XP_016860601.1">
    <property type="nucleotide sequence ID" value="XM_017005112.1"/>
</dbReference>
<dbReference type="RefSeq" id="XP_024308944.1">
    <molecule id="P58215-1"/>
    <property type="nucleotide sequence ID" value="XM_024453176.2"/>
</dbReference>
<dbReference type="RefSeq" id="XP_024308945.1">
    <molecule id="P58215-1"/>
    <property type="nucleotide sequence ID" value="XM_024453177.2"/>
</dbReference>
<dbReference type="RefSeq" id="XP_024308946.1">
    <molecule id="P58215-1"/>
    <property type="nucleotide sequence ID" value="XM_024453178.2"/>
</dbReference>
<dbReference type="RefSeq" id="XP_054200194.1">
    <molecule id="P58215-1"/>
    <property type="nucleotide sequence ID" value="XM_054344219.1"/>
</dbReference>
<dbReference type="RefSeq" id="XP_054200195.1">
    <molecule id="P58215-1"/>
    <property type="nucleotide sequence ID" value="XM_054344220.1"/>
</dbReference>
<dbReference type="RefSeq" id="XP_054200196.1">
    <molecule id="P58215-1"/>
    <property type="nucleotide sequence ID" value="XM_054344221.1"/>
</dbReference>
<dbReference type="RefSeq" id="XP_054200197.1">
    <molecule id="P58215-1"/>
    <property type="nucleotide sequence ID" value="XM_054344222.1"/>
</dbReference>
<dbReference type="SMR" id="P58215"/>
<dbReference type="BioGRID" id="124210">
    <property type="interactions" value="25"/>
</dbReference>
<dbReference type="FunCoup" id="P58215">
    <property type="interactions" value="235"/>
</dbReference>
<dbReference type="IntAct" id="P58215">
    <property type="interactions" value="23"/>
</dbReference>
<dbReference type="STRING" id="9606.ENSP00000264094"/>
<dbReference type="BindingDB" id="P58215"/>
<dbReference type="ChEMBL" id="CHEMBL4105989"/>
<dbReference type="DrugCentral" id="P58215"/>
<dbReference type="GlyConnect" id="1481">
    <property type="glycosylation" value="3 N-Linked glycans (1 site)"/>
</dbReference>
<dbReference type="GlyCosmos" id="P58215">
    <property type="glycosylation" value="5 sites, 3 glycans"/>
</dbReference>
<dbReference type="GlyGen" id="P58215">
    <property type="glycosylation" value="5 sites, 8 N-linked glycans (1 site)"/>
</dbReference>
<dbReference type="iPTMnet" id="P58215"/>
<dbReference type="PhosphoSitePlus" id="P58215"/>
<dbReference type="BioMuta" id="LOXL3"/>
<dbReference type="DMDM" id="14916616"/>
<dbReference type="jPOST" id="P58215"/>
<dbReference type="MassIVE" id="P58215"/>
<dbReference type="PaxDb" id="9606-ENSP00000264094"/>
<dbReference type="PeptideAtlas" id="P58215"/>
<dbReference type="ProteomicsDB" id="57056">
    <molecule id="P58215-1"/>
</dbReference>
<dbReference type="ProteomicsDB" id="66450"/>
<dbReference type="Antibodypedia" id="31582">
    <property type="antibodies" value="175 antibodies from 22 providers"/>
</dbReference>
<dbReference type="DNASU" id="84695"/>
<dbReference type="Ensembl" id="ENST00000264094.8">
    <molecule id="P58215-1"/>
    <property type="protein sequence ID" value="ENSP00000264094.3"/>
    <property type="gene ID" value="ENSG00000115318.12"/>
</dbReference>
<dbReference type="Ensembl" id="ENST00000393937.6">
    <molecule id="P58215-3"/>
    <property type="protein sequence ID" value="ENSP00000377512.2"/>
    <property type="gene ID" value="ENSG00000115318.12"/>
</dbReference>
<dbReference type="GeneID" id="84695"/>
<dbReference type="KEGG" id="hsa:84695"/>
<dbReference type="MANE-Select" id="ENST00000264094.8">
    <property type="protein sequence ID" value="ENSP00000264094.3"/>
    <property type="RefSeq nucleotide sequence ID" value="NM_032603.5"/>
    <property type="RefSeq protein sequence ID" value="NP_115992.1"/>
</dbReference>
<dbReference type="UCSC" id="uc002smp.3">
    <molecule id="P58215-1"/>
    <property type="organism name" value="human"/>
</dbReference>
<dbReference type="AGR" id="HGNC:13869"/>
<dbReference type="CTD" id="84695"/>
<dbReference type="DisGeNET" id="84695"/>
<dbReference type="GeneCards" id="LOXL3"/>
<dbReference type="HGNC" id="HGNC:13869">
    <property type="gene designation" value="LOXL3"/>
</dbReference>
<dbReference type="HPA" id="ENSG00000115318">
    <property type="expression patterns" value="Low tissue specificity"/>
</dbReference>
<dbReference type="MalaCards" id="LOXL3"/>
<dbReference type="MIM" id="607163">
    <property type="type" value="gene"/>
</dbReference>
<dbReference type="MIM" id="619781">
    <property type="type" value="phenotype"/>
</dbReference>
<dbReference type="neXtProt" id="NX_P58215"/>
<dbReference type="OpenTargets" id="ENSG00000115318"/>
<dbReference type="PharmGKB" id="PA30430"/>
<dbReference type="VEuPathDB" id="HostDB:ENSG00000115318"/>
<dbReference type="eggNOG" id="ENOG502QSX8">
    <property type="taxonomic scope" value="Eukaryota"/>
</dbReference>
<dbReference type="GeneTree" id="ENSGT00940000158157"/>
<dbReference type="InParanoid" id="P58215"/>
<dbReference type="OMA" id="HWGLICG"/>
<dbReference type="OrthoDB" id="547291at2759"/>
<dbReference type="PAN-GO" id="P58215">
    <property type="GO annotations" value="6 GO annotations based on evolutionary models"/>
</dbReference>
<dbReference type="PhylomeDB" id="P58215"/>
<dbReference type="TreeFam" id="TF326061"/>
<dbReference type="BioCyc" id="MetaCyc:ENSG00000115318-MONOMER"/>
<dbReference type="BRENDA" id="1.4.3.13">
    <property type="organism ID" value="2681"/>
</dbReference>
<dbReference type="PathwayCommons" id="P58215"/>
<dbReference type="Reactome" id="R-HSA-1566948">
    <property type="pathway name" value="Elastic fibre formation"/>
</dbReference>
<dbReference type="Reactome" id="R-HSA-2243919">
    <property type="pathway name" value="Crosslinking of collagen fibrils"/>
</dbReference>
<dbReference type="SignaLink" id="P58215"/>
<dbReference type="BioGRID-ORCS" id="84695">
    <property type="hits" value="10 hits in 1151 CRISPR screens"/>
</dbReference>
<dbReference type="ChiTaRS" id="LOXL3">
    <property type="organism name" value="human"/>
</dbReference>
<dbReference type="GeneWiki" id="LOXL3"/>
<dbReference type="GenomeRNAi" id="84695"/>
<dbReference type="Pharos" id="P58215">
    <property type="development level" value="Tchem"/>
</dbReference>
<dbReference type="PRO" id="PR:P58215"/>
<dbReference type="Proteomes" id="UP000005640">
    <property type="component" value="Chromosome 2"/>
</dbReference>
<dbReference type="RNAct" id="P58215">
    <property type="molecule type" value="protein"/>
</dbReference>
<dbReference type="Bgee" id="ENSG00000115318">
    <property type="expression patterns" value="Expressed in tibia and 141 other cell types or tissues"/>
</dbReference>
<dbReference type="ExpressionAtlas" id="P58215">
    <property type="expression patterns" value="baseline and differential"/>
</dbReference>
<dbReference type="GO" id="GO:0062023">
    <property type="term" value="C:collagen-containing extracellular matrix"/>
    <property type="evidence" value="ECO:0000318"/>
    <property type="project" value="GO_Central"/>
</dbReference>
<dbReference type="GO" id="GO:0005737">
    <property type="term" value="C:cytoplasm"/>
    <property type="evidence" value="ECO:0000314"/>
    <property type="project" value="UniProtKB"/>
</dbReference>
<dbReference type="GO" id="GO:0005576">
    <property type="term" value="C:extracellular region"/>
    <property type="evidence" value="ECO:0000314"/>
    <property type="project" value="UniProtKB"/>
</dbReference>
<dbReference type="GO" id="GO:0005615">
    <property type="term" value="C:extracellular space"/>
    <property type="evidence" value="ECO:0000250"/>
    <property type="project" value="UniProtKB"/>
</dbReference>
<dbReference type="GO" id="GO:0016020">
    <property type="term" value="C:membrane"/>
    <property type="evidence" value="ECO:0007669"/>
    <property type="project" value="InterPro"/>
</dbReference>
<dbReference type="GO" id="GO:0005634">
    <property type="term" value="C:nucleus"/>
    <property type="evidence" value="ECO:0000314"/>
    <property type="project" value="UniProtKB"/>
</dbReference>
<dbReference type="GO" id="GO:0005507">
    <property type="term" value="F:copper ion binding"/>
    <property type="evidence" value="ECO:0000303"/>
    <property type="project" value="UniProtKB"/>
</dbReference>
<dbReference type="GO" id="GO:0001968">
    <property type="term" value="F:fibronectin binding"/>
    <property type="evidence" value="ECO:0000250"/>
    <property type="project" value="UniProtKB"/>
</dbReference>
<dbReference type="GO" id="GO:0004720">
    <property type="term" value="F:protein-lysine 6-oxidase activity"/>
    <property type="evidence" value="ECO:0000314"/>
    <property type="project" value="UniProtKB"/>
</dbReference>
<dbReference type="GO" id="GO:0030199">
    <property type="term" value="P:collagen fibril organization"/>
    <property type="evidence" value="ECO:0000318"/>
    <property type="project" value="GO_Central"/>
</dbReference>
<dbReference type="GO" id="GO:0001837">
    <property type="term" value="P:epithelial to mesenchymal transition"/>
    <property type="evidence" value="ECO:0000314"/>
    <property type="project" value="UniProtKB"/>
</dbReference>
<dbReference type="GO" id="GO:1905590">
    <property type="term" value="P:fibronectin fibril organization"/>
    <property type="evidence" value="ECO:0000250"/>
    <property type="project" value="UniProtKB"/>
</dbReference>
<dbReference type="GO" id="GO:0006954">
    <property type="term" value="P:inflammatory response"/>
    <property type="evidence" value="ECO:0000250"/>
    <property type="project" value="UniProtKB"/>
</dbReference>
<dbReference type="GO" id="GO:0030324">
    <property type="term" value="P:lung development"/>
    <property type="evidence" value="ECO:0000250"/>
    <property type="project" value="UniProtKB"/>
</dbReference>
<dbReference type="GO" id="GO:0045892">
    <property type="term" value="P:negative regulation of DNA-templated transcription"/>
    <property type="evidence" value="ECO:0000314"/>
    <property type="project" value="UniProtKB"/>
</dbReference>
<dbReference type="GO" id="GO:2000329">
    <property type="term" value="P:negative regulation of T-helper 17 cell lineage commitment"/>
    <property type="evidence" value="ECO:0000314"/>
    <property type="project" value="UniProt"/>
</dbReference>
<dbReference type="GO" id="GO:0018057">
    <property type="term" value="P:peptidyl-lysine oxidation"/>
    <property type="evidence" value="ECO:0000314"/>
    <property type="project" value="UniProtKB"/>
</dbReference>
<dbReference type="GO" id="GO:2001046">
    <property type="term" value="P:positive regulation of integrin-mediated signaling pathway"/>
    <property type="evidence" value="ECO:0000250"/>
    <property type="project" value="UniProtKB"/>
</dbReference>
<dbReference type="GO" id="GO:0060021">
    <property type="term" value="P:roof of mouth development"/>
    <property type="evidence" value="ECO:0000250"/>
    <property type="project" value="UniProtKB"/>
</dbReference>
<dbReference type="GO" id="GO:0061053">
    <property type="term" value="P:somite development"/>
    <property type="evidence" value="ECO:0000250"/>
    <property type="project" value="UniProtKB"/>
</dbReference>
<dbReference type="GO" id="GO:0021510">
    <property type="term" value="P:spinal cord development"/>
    <property type="evidence" value="ECO:0000250"/>
    <property type="project" value="UniProtKB"/>
</dbReference>
<dbReference type="FunFam" id="3.10.250.10:FF:000001">
    <property type="entry name" value="Lysyl oxidase 4 isoform X1"/>
    <property type="match status" value="2"/>
</dbReference>
<dbReference type="FunFam" id="3.10.250.10:FF:000008">
    <property type="entry name" value="Lysyl oxidase homolog 2"/>
    <property type="match status" value="1"/>
</dbReference>
<dbReference type="FunFam" id="3.10.250.10:FF:000022">
    <property type="entry name" value="lysyl oxidase homolog 3 isoform X2"/>
    <property type="match status" value="1"/>
</dbReference>
<dbReference type="Gene3D" id="3.10.250.10">
    <property type="entry name" value="SRCR-like domain"/>
    <property type="match status" value="4"/>
</dbReference>
<dbReference type="InterPro" id="IPR050912">
    <property type="entry name" value="LOX-like_protein"/>
</dbReference>
<dbReference type="InterPro" id="IPR001695">
    <property type="entry name" value="Lysyl_oxidase"/>
</dbReference>
<dbReference type="InterPro" id="IPR019828">
    <property type="entry name" value="Lysyl_oxidase_CS"/>
</dbReference>
<dbReference type="InterPro" id="IPR001190">
    <property type="entry name" value="SRCR"/>
</dbReference>
<dbReference type="InterPro" id="IPR036772">
    <property type="entry name" value="SRCR-like_dom_sf"/>
</dbReference>
<dbReference type="PANTHER" id="PTHR45817:SF2">
    <property type="entry name" value="LYSYL OXIDASE HOMOLOG 3"/>
    <property type="match status" value="1"/>
</dbReference>
<dbReference type="PANTHER" id="PTHR45817">
    <property type="entry name" value="LYSYL OXIDASE-LIKE-RELATED"/>
    <property type="match status" value="1"/>
</dbReference>
<dbReference type="Pfam" id="PF01186">
    <property type="entry name" value="Lysyl_oxidase"/>
    <property type="match status" value="1"/>
</dbReference>
<dbReference type="Pfam" id="PF00530">
    <property type="entry name" value="SRCR"/>
    <property type="match status" value="4"/>
</dbReference>
<dbReference type="PRINTS" id="PR00074">
    <property type="entry name" value="LYSYLOXIDASE"/>
</dbReference>
<dbReference type="PRINTS" id="PR00258">
    <property type="entry name" value="SPERACTRCPTR"/>
</dbReference>
<dbReference type="SMART" id="SM00202">
    <property type="entry name" value="SR"/>
    <property type="match status" value="4"/>
</dbReference>
<dbReference type="SUPFAM" id="SSF56487">
    <property type="entry name" value="SRCR-like"/>
    <property type="match status" value="4"/>
</dbReference>
<dbReference type="PROSITE" id="PS00926">
    <property type="entry name" value="LYSYL_OXIDASE"/>
    <property type="match status" value="1"/>
</dbReference>
<dbReference type="PROSITE" id="PS00420">
    <property type="entry name" value="SRCR_1"/>
    <property type="match status" value="1"/>
</dbReference>
<dbReference type="PROSITE" id="PS50287">
    <property type="entry name" value="SRCR_2"/>
    <property type="match status" value="4"/>
</dbReference>
<feature type="signal peptide" evidence="4">
    <location>
        <begin position="1"/>
        <end position="25"/>
    </location>
</feature>
<feature type="chain" id="PRO_0000018533" description="Lysyl oxidase homolog 3">
    <location>
        <begin position="26"/>
        <end position="753"/>
    </location>
</feature>
<feature type="domain" description="SRCR 1" evidence="5">
    <location>
        <begin position="44"/>
        <end position="145"/>
    </location>
</feature>
<feature type="domain" description="SRCR 2" evidence="5">
    <location>
        <begin position="169"/>
        <end position="282"/>
    </location>
</feature>
<feature type="domain" description="SRCR 3" evidence="5">
    <location>
        <begin position="307"/>
        <end position="407"/>
    </location>
</feature>
<feature type="domain" description="SRCR 4" evidence="5">
    <location>
        <begin position="417"/>
        <end position="525"/>
    </location>
</feature>
<feature type="region of interest" description="Disordered" evidence="6">
    <location>
        <begin position="290"/>
        <end position="315"/>
    </location>
</feature>
<feature type="region of interest" description="Lysyl-oxidase like">
    <location>
        <begin position="529"/>
        <end position="732"/>
    </location>
</feature>
<feature type="compositionally biased region" description="Low complexity" evidence="6">
    <location>
        <begin position="290"/>
        <end position="302"/>
    </location>
</feature>
<feature type="binding site" evidence="4">
    <location>
        <position position="607"/>
    </location>
    <ligand>
        <name>Cu cation</name>
        <dbReference type="ChEBI" id="CHEBI:23378"/>
    </ligand>
</feature>
<feature type="binding site" evidence="4">
    <location>
        <position position="609"/>
    </location>
    <ligand>
        <name>Cu cation</name>
        <dbReference type="ChEBI" id="CHEBI:23378"/>
    </ligand>
</feature>
<feature type="binding site" evidence="4">
    <location>
        <position position="611"/>
    </location>
    <ligand>
        <name>Cu cation</name>
        <dbReference type="ChEBI" id="CHEBI:23378"/>
    </ligand>
</feature>
<feature type="modified residue" description="2',4',5'-topaquinone" evidence="2">
    <location>
        <position position="670"/>
    </location>
</feature>
<feature type="glycosylation site" description="N-linked (GlcNAc...) asparagine" evidence="4">
    <location>
        <position position="111"/>
    </location>
</feature>
<feature type="glycosylation site" description="N-linked (GlcNAc...) asparagine" evidence="4">
    <location>
        <position position="266"/>
    </location>
</feature>
<feature type="glycosylation site" description="N-linked (GlcNAc...) asparagine" evidence="4">
    <location>
        <position position="390"/>
    </location>
</feature>
<feature type="glycosylation site" description="N-linked (GlcNAc...) asparagine" evidence="4">
    <location>
        <position position="481"/>
    </location>
</feature>
<feature type="glycosylation site" description="N-linked (GlcNAc...) asparagine" evidence="4">
    <location>
        <position position="625"/>
    </location>
</feature>
<feature type="disulfide bond" evidence="5">
    <location>
        <begin position="70"/>
        <end position="134"/>
    </location>
</feature>
<feature type="disulfide bond" evidence="5">
    <location>
        <begin position="83"/>
        <end position="144"/>
    </location>
</feature>
<feature type="disulfide bond" evidence="5">
    <location>
        <begin position="114"/>
        <end position="124"/>
    </location>
</feature>
<feature type="disulfide bond" evidence="5">
    <location>
        <begin position="201"/>
        <end position="271"/>
    </location>
</feature>
<feature type="disulfide bond" evidence="5">
    <location>
        <begin position="214"/>
        <end position="281"/>
    </location>
</feature>
<feature type="disulfide bond" evidence="5">
    <location>
        <begin position="248"/>
        <end position="258"/>
    </location>
</feature>
<feature type="disulfide bond" evidence="5">
    <location>
        <begin position="332"/>
        <end position="396"/>
    </location>
</feature>
<feature type="disulfide bond" evidence="5">
    <location>
        <begin position="345"/>
        <end position="406"/>
    </location>
</feature>
<feature type="disulfide bond" evidence="5">
    <location>
        <begin position="376"/>
        <end position="386"/>
    </location>
</feature>
<feature type="disulfide bond" evidence="5">
    <location>
        <begin position="446"/>
        <end position="511"/>
    </location>
</feature>
<feature type="disulfide bond" evidence="5">
    <location>
        <begin position="459"/>
        <end position="524"/>
    </location>
</feature>
<feature type="disulfide bond" evidence="5">
    <location>
        <begin position="492"/>
        <end position="502"/>
    </location>
</feature>
<feature type="disulfide bond" evidence="5">
    <location>
        <begin position="554"/>
        <end position="560"/>
    </location>
</feature>
<feature type="disulfide bond" evidence="5">
    <location>
        <begin position="606"/>
        <end position="654"/>
    </location>
</feature>
<feature type="disulfide bond" evidence="5">
    <location>
        <begin position="638"/>
        <end position="644"/>
    </location>
</feature>
<feature type="disulfide bond" evidence="5">
    <location>
        <begin position="666"/>
        <end position="676"/>
    </location>
</feature>
<feature type="disulfide bond" evidence="5">
    <location>
        <begin position="713"/>
        <end position="727"/>
    </location>
</feature>
<feature type="cross-link" description="Lysine tyrosylquinone (Lys-Tyr)" evidence="2">
    <location>
        <begin position="634"/>
        <end position="670"/>
    </location>
</feature>
<feature type="splice variant" id="VSP_054417" description="In isoform 2." evidence="16">
    <location>
        <begin position="1"/>
        <end position="361"/>
    </location>
</feature>
<feature type="splice variant" id="VSP_054418" description="In isoform 3." evidence="15">
    <location>
        <begin position="159"/>
        <end position="303"/>
    </location>
</feature>
<feature type="sequence variant" id="VAR_050011" description="In dbSNP:rs17010021.">
    <original>I</original>
    <variation>F</variation>
    <location>
        <position position="615"/>
    </location>
</feature>
<feature type="sequence variant" id="VAR_077909" description="Found in patients with Stickler syndrome; uncertain significance; dbSNP:rs786204838." evidence="8">
    <original>C</original>
    <variation>Y</variation>
    <location>
        <position position="676"/>
    </location>
</feature>
<feature type="mutagenesis site" description="Impaired ability to mediate deacetylation of STAT3; when associated with A-214; A-345 and A-459." evidence="11">
    <original>C</original>
    <variation>A</variation>
    <location>
        <position position="83"/>
    </location>
</feature>
<feature type="mutagenesis site" description="Impaired ability to mediate deacetylation of STAT3; when associated with A-83; A-345 and A-459." evidence="11">
    <original>C</original>
    <variation>A</variation>
    <location>
        <position position="214"/>
    </location>
</feature>
<feature type="mutagenesis site" description="Impaired ability to mediate deacetylation of STAT3; when associated with A-83; A-214 and A-459." evidence="11">
    <original>C</original>
    <variation>A</variation>
    <location>
        <position position="345"/>
    </location>
</feature>
<feature type="mutagenesis site" description="Impaired ability to mediate deacetylation of STAT3; when associated with A-446 and A-492." evidence="11">
    <original>C</original>
    <variation>A</variation>
    <location>
        <position position="376"/>
    </location>
</feature>
<feature type="mutagenesis site" description="Impaired ability to mediate deacetylation of STAT3; when associated with A-376 and A-492." evidence="11">
    <original>C</original>
    <variation>A</variation>
    <location>
        <position position="446"/>
    </location>
</feature>
<feature type="mutagenesis site" description="Impaired ability to mediate deacetylation of STAT3; when associated with A-83; A-214 and A-345." evidence="11">
    <original>C</original>
    <variation>A</variation>
    <location>
        <position position="459"/>
    </location>
</feature>
<feature type="mutagenesis site" description="Impaired ability to mediate deacetylation of STAT3; when associated with A-376 and A-446." evidence="11">
    <original>C</original>
    <variation>A</variation>
    <location>
        <position position="492"/>
    </location>
</feature>
<feature type="mutagenesis site" description="Impaired ability to mediate deacetylation of STAT3." evidence="11">
    <original>HGH</original>
    <variation>QGQ</variation>
    <location>
        <begin position="607"/>
        <end position="609"/>
    </location>
</feature>
<feature type="sequence conflict" description="In Ref. 3; AAK91134." evidence="17" ref="3">
    <original>E</original>
    <variation>K</variation>
    <location>
        <position position="159"/>
    </location>
</feature>
<accession>P58215</accession>
<accession>D6W5J1</accession>
<accession>Q2EHP2</accession>
<accession>Q6IPL7</accession>
<accession>Q96RS1</accession>
<sequence length="753" mass="83166">MRPVSVWQWSPWGLLLCLLCSSCLGSPSPSTGPEKKAGSQGLRFRLAGFPRKPYEGRVEIQRAGEWGTICDDDFTLQAAHILCRELGFTEATGWTHSAKYGPGTGRIWLDNLSCSGTEQSVTECASRGWGNSDCTHDEDAGVICKDQRLPGFSDSNVIEVEHHLQVEEVRIRPAVGWGRRPLPVTEGLVEVRLPDGWSQVCDKGWSAHNSHVVCGMLGFPSEKRVNAAFYRLLAQRQQHSFGLHGVACVGTEAHLSLCSLEFYRANDTARCPGGGPAVVSCVPGPVYAASSGQKKQQQSKPQGEARVRLKGGAHPGEGRVEVLKASTWGTVCDRKWDLHAASVVCRELGFGSAREALSGARMGQGMGAIHLSEVRCSGQELSLWKCPHKNITAEDCSHSQDAGVRCNLPYTGAETRIRLSGGRSQHEGRVEVQIGGPGPLRWGLICGDDWGTLEAMVACRQLGLGYANHGLQETWYWDSGNITEVVMSGVRCTGTELSLDQCAHHGTHITCKRTGTRFTAGVICSETASDLLLHSALVQETAYIEDRPLHMLYCAAEENCLASSARSANWPYGHRRLLRFSSQIHNLGRADFRPKAGRHSWVWHECHGHYHSMDIFTHYDILTPNGTKVAEGHKASFCLEDTECQEDVSKRYECANFGEQGITVGCWDLYRHDIDCQWIDITDVKPGNYILQVVINPNFEVAESDFTNNAMKCNCKYDGHRIWVHNCHIGDAFSEEANRRFERYPGQTSNQII</sequence>